<dbReference type="EMBL" id="AM295007">
    <property type="protein sequence ID" value="CAM30168.1"/>
    <property type="molecule type" value="Genomic_DNA"/>
</dbReference>
<dbReference type="RefSeq" id="WP_002984497.1">
    <property type="nucleotide sequence ID" value="NC_009332.1"/>
</dbReference>
<dbReference type="SMR" id="A2RE93"/>
<dbReference type="KEGG" id="spf:SpyM50840"/>
<dbReference type="HOGENOM" id="CLU_166693_0_0_9"/>
<dbReference type="Gene3D" id="1.10.220.80">
    <property type="entry name" value="BH2638-like"/>
    <property type="match status" value="1"/>
</dbReference>
<dbReference type="HAMAP" id="MF_01041">
    <property type="entry name" value="UPF0223"/>
    <property type="match status" value="1"/>
</dbReference>
<dbReference type="InterPro" id="IPR023324">
    <property type="entry name" value="BH2638-like_sf"/>
</dbReference>
<dbReference type="InterPro" id="IPR007920">
    <property type="entry name" value="UPF0223"/>
</dbReference>
<dbReference type="NCBIfam" id="NF003353">
    <property type="entry name" value="PRK04387.1"/>
    <property type="match status" value="1"/>
</dbReference>
<dbReference type="Pfam" id="PF05256">
    <property type="entry name" value="UPF0223"/>
    <property type="match status" value="1"/>
</dbReference>
<dbReference type="PIRSF" id="PIRSF037260">
    <property type="entry name" value="UPF0223"/>
    <property type="match status" value="1"/>
</dbReference>
<dbReference type="SUPFAM" id="SSF158504">
    <property type="entry name" value="BH2638-like"/>
    <property type="match status" value="1"/>
</dbReference>
<organism>
    <name type="scientific">Streptococcus pyogenes serotype M5 (strain Manfredo)</name>
    <dbReference type="NCBI Taxonomy" id="160491"/>
    <lineage>
        <taxon>Bacteria</taxon>
        <taxon>Bacillati</taxon>
        <taxon>Bacillota</taxon>
        <taxon>Bacilli</taxon>
        <taxon>Lactobacillales</taxon>
        <taxon>Streptococcaceae</taxon>
        <taxon>Streptococcus</taxon>
    </lineage>
</organism>
<evidence type="ECO:0000255" key="1">
    <source>
        <dbReference type="HAMAP-Rule" id="MF_01041"/>
    </source>
</evidence>
<proteinExistence type="inferred from homology"/>
<name>Y840_STRPG</name>
<comment type="similarity">
    <text evidence="1">Belongs to the UPF0223 family.</text>
</comment>
<reference key="1">
    <citation type="journal article" date="2007" name="J. Bacteriol.">
        <title>Complete genome of acute rheumatic fever-associated serotype M5 Streptococcus pyogenes strain Manfredo.</title>
        <authorList>
            <person name="Holden M.T.G."/>
            <person name="Scott A."/>
            <person name="Cherevach I."/>
            <person name="Chillingworth T."/>
            <person name="Churcher C."/>
            <person name="Cronin A."/>
            <person name="Dowd L."/>
            <person name="Feltwell T."/>
            <person name="Hamlin N."/>
            <person name="Holroyd S."/>
            <person name="Jagels K."/>
            <person name="Moule S."/>
            <person name="Mungall K."/>
            <person name="Quail M.A."/>
            <person name="Price C."/>
            <person name="Rabbinowitsch E."/>
            <person name="Sharp S."/>
            <person name="Skelton J."/>
            <person name="Whitehead S."/>
            <person name="Barrell B.G."/>
            <person name="Kehoe M."/>
            <person name="Parkhill J."/>
        </authorList>
    </citation>
    <scope>NUCLEOTIDE SEQUENCE [LARGE SCALE GENOMIC DNA]</scope>
    <source>
        <strain>Manfredo</strain>
    </source>
</reference>
<gene>
    <name type="ordered locus">SpyM50840</name>
</gene>
<sequence length="92" mass="10658">MSGNYYYPLDLSWSTEEISSVLHFLNKVELAYEKKVDAKQLLDSYKTYKTIVKSKAQEKQIDRDFQKVSGYSTYQVVKKAKAIEKGFFSLGN</sequence>
<protein>
    <recommendedName>
        <fullName evidence="1">UPF0223 protein SpyM50840</fullName>
    </recommendedName>
</protein>
<accession>A2RE93</accession>
<feature type="chain" id="PRO_1000064150" description="UPF0223 protein SpyM50840">
    <location>
        <begin position="1"/>
        <end position="92"/>
    </location>
</feature>